<reference key="1">
    <citation type="submission" date="2008-08" db="EMBL/GenBank/DDBJ databases">
        <title>The complete genome sequence of Thermodesulfovibrio yellowstonii strain ATCC 51303 / DSM 11347 / YP87.</title>
        <authorList>
            <person name="Dodson R.J."/>
            <person name="Durkin A.S."/>
            <person name="Wu M."/>
            <person name="Eisen J."/>
            <person name="Sutton G."/>
        </authorList>
    </citation>
    <scope>NUCLEOTIDE SEQUENCE [LARGE SCALE GENOMIC DNA]</scope>
    <source>
        <strain>ATCC 51303 / DSM 11347 / YP87</strain>
    </source>
</reference>
<feature type="chain" id="PRO_0000376395" description="NADH-quinone oxidoreductase subunit B 1">
    <location>
        <begin position="1"/>
        <end position="199"/>
    </location>
</feature>
<feature type="binding site" evidence="1">
    <location>
        <position position="52"/>
    </location>
    <ligand>
        <name>[4Fe-4S] cluster</name>
        <dbReference type="ChEBI" id="CHEBI:49883"/>
    </ligand>
</feature>
<feature type="binding site" evidence="1">
    <location>
        <position position="53"/>
    </location>
    <ligand>
        <name>[4Fe-4S] cluster</name>
        <dbReference type="ChEBI" id="CHEBI:49883"/>
    </ligand>
</feature>
<feature type="binding site" evidence="1">
    <location>
        <position position="117"/>
    </location>
    <ligand>
        <name>[4Fe-4S] cluster</name>
        <dbReference type="ChEBI" id="CHEBI:49883"/>
    </ligand>
</feature>
<feature type="binding site" evidence="1">
    <location>
        <position position="146"/>
    </location>
    <ligand>
        <name>[4Fe-4S] cluster</name>
        <dbReference type="ChEBI" id="CHEBI:49883"/>
    </ligand>
</feature>
<comment type="function">
    <text evidence="1">NDH-1 shuttles electrons from NADH, via FMN and iron-sulfur (Fe-S) centers, to quinones in the respiratory chain. The immediate electron acceptor for the enzyme in this species is believed to be ubiquinone. Couples the redox reaction to proton translocation (for every two electrons transferred, four hydrogen ions are translocated across the cytoplasmic membrane), and thus conserves the redox energy in a proton gradient.</text>
</comment>
<comment type="catalytic activity">
    <reaction evidence="1">
        <text>a quinone + NADH + 5 H(+)(in) = a quinol + NAD(+) + 4 H(+)(out)</text>
        <dbReference type="Rhea" id="RHEA:57888"/>
        <dbReference type="ChEBI" id="CHEBI:15378"/>
        <dbReference type="ChEBI" id="CHEBI:24646"/>
        <dbReference type="ChEBI" id="CHEBI:57540"/>
        <dbReference type="ChEBI" id="CHEBI:57945"/>
        <dbReference type="ChEBI" id="CHEBI:132124"/>
    </reaction>
</comment>
<comment type="cofactor">
    <cofactor evidence="1">
        <name>[4Fe-4S] cluster</name>
        <dbReference type="ChEBI" id="CHEBI:49883"/>
    </cofactor>
    <text evidence="1">Binds 1 [4Fe-4S] cluster.</text>
</comment>
<comment type="subunit">
    <text evidence="1">NDH-1 is composed of 14 different subunits. Subunits NuoB, C, D, E, F, and G constitute the peripheral sector of the complex.</text>
</comment>
<comment type="subcellular location">
    <subcellularLocation>
        <location evidence="1">Cell inner membrane</location>
        <topology evidence="1">Peripheral membrane protein</topology>
        <orientation evidence="1">Cytoplasmic side</orientation>
    </subcellularLocation>
</comment>
<comment type="similarity">
    <text evidence="1">Belongs to the complex I 20 kDa subunit family.</text>
</comment>
<organism>
    <name type="scientific">Thermodesulfovibrio yellowstonii (strain ATCC 51303 / DSM 11347 / YP87)</name>
    <dbReference type="NCBI Taxonomy" id="289376"/>
    <lineage>
        <taxon>Bacteria</taxon>
        <taxon>Pseudomonadati</taxon>
        <taxon>Nitrospirota</taxon>
        <taxon>Thermodesulfovibrionia</taxon>
        <taxon>Thermodesulfovibrionales</taxon>
        <taxon>Thermodesulfovibrionaceae</taxon>
        <taxon>Thermodesulfovibrio</taxon>
    </lineage>
</organism>
<name>NUOB1_THEYD</name>
<gene>
    <name evidence="1" type="primary">nuoB1</name>
    <name type="ordered locus">THEYE_A0912</name>
</gene>
<dbReference type="EC" id="7.1.1.-" evidence="1"/>
<dbReference type="EMBL" id="CP001147">
    <property type="protein sequence ID" value="ACI20672.1"/>
    <property type="molecule type" value="Genomic_DNA"/>
</dbReference>
<dbReference type="RefSeq" id="WP_012545406.1">
    <property type="nucleotide sequence ID" value="NC_011296.1"/>
</dbReference>
<dbReference type="RefSeq" id="YP_002248748.1">
    <property type="nucleotide sequence ID" value="NC_011296.1"/>
</dbReference>
<dbReference type="SMR" id="B5YKI3"/>
<dbReference type="FunCoup" id="B5YKI3">
    <property type="interactions" value="282"/>
</dbReference>
<dbReference type="STRING" id="289376.THEYE_A0912"/>
<dbReference type="EnsemblBacteria" id="ACI20672">
    <property type="protein sequence ID" value="ACI20672"/>
    <property type="gene ID" value="THEYE_A0912"/>
</dbReference>
<dbReference type="KEGG" id="tye:THEYE_A0912"/>
<dbReference type="PATRIC" id="fig|289376.4.peg.898"/>
<dbReference type="eggNOG" id="COG0377">
    <property type="taxonomic scope" value="Bacteria"/>
</dbReference>
<dbReference type="HOGENOM" id="CLU_055737_7_3_0"/>
<dbReference type="InParanoid" id="B5YKI3"/>
<dbReference type="OrthoDB" id="9786737at2"/>
<dbReference type="Proteomes" id="UP000000718">
    <property type="component" value="Chromosome"/>
</dbReference>
<dbReference type="GO" id="GO:0005886">
    <property type="term" value="C:plasma membrane"/>
    <property type="evidence" value="ECO:0007669"/>
    <property type="project" value="UniProtKB-SubCell"/>
</dbReference>
<dbReference type="GO" id="GO:0045271">
    <property type="term" value="C:respiratory chain complex I"/>
    <property type="evidence" value="ECO:0000318"/>
    <property type="project" value="GO_Central"/>
</dbReference>
<dbReference type="GO" id="GO:0051539">
    <property type="term" value="F:4 iron, 4 sulfur cluster binding"/>
    <property type="evidence" value="ECO:0007669"/>
    <property type="project" value="UniProtKB-KW"/>
</dbReference>
<dbReference type="GO" id="GO:0005506">
    <property type="term" value="F:iron ion binding"/>
    <property type="evidence" value="ECO:0007669"/>
    <property type="project" value="UniProtKB-UniRule"/>
</dbReference>
<dbReference type="GO" id="GO:0008137">
    <property type="term" value="F:NADH dehydrogenase (ubiquinone) activity"/>
    <property type="evidence" value="ECO:0000318"/>
    <property type="project" value="GO_Central"/>
</dbReference>
<dbReference type="GO" id="GO:0050136">
    <property type="term" value="F:NADH:ubiquinone reductase (non-electrogenic) activity"/>
    <property type="evidence" value="ECO:0007669"/>
    <property type="project" value="UniProtKB-UniRule"/>
</dbReference>
<dbReference type="GO" id="GO:0048038">
    <property type="term" value="F:quinone binding"/>
    <property type="evidence" value="ECO:0007669"/>
    <property type="project" value="UniProtKB-KW"/>
</dbReference>
<dbReference type="GO" id="GO:0009060">
    <property type="term" value="P:aerobic respiration"/>
    <property type="evidence" value="ECO:0000318"/>
    <property type="project" value="GO_Central"/>
</dbReference>
<dbReference type="GO" id="GO:0015990">
    <property type="term" value="P:electron transport coupled proton transport"/>
    <property type="evidence" value="ECO:0000318"/>
    <property type="project" value="GO_Central"/>
</dbReference>
<dbReference type="FunFam" id="3.40.50.12280:FF:000002">
    <property type="entry name" value="NADH-quinone oxidoreductase subunit B"/>
    <property type="match status" value="1"/>
</dbReference>
<dbReference type="Gene3D" id="3.40.50.12280">
    <property type="match status" value="1"/>
</dbReference>
<dbReference type="HAMAP" id="MF_01356">
    <property type="entry name" value="NDH1_NuoB"/>
    <property type="match status" value="1"/>
</dbReference>
<dbReference type="InterPro" id="IPR006137">
    <property type="entry name" value="NADH_UbQ_OxRdtase-like_20kDa"/>
</dbReference>
<dbReference type="InterPro" id="IPR006138">
    <property type="entry name" value="NADH_UQ_OxRdtase_20Kd_su"/>
</dbReference>
<dbReference type="NCBIfam" id="TIGR01957">
    <property type="entry name" value="nuoB_fam"/>
    <property type="match status" value="1"/>
</dbReference>
<dbReference type="NCBIfam" id="NF005012">
    <property type="entry name" value="PRK06411.1"/>
    <property type="match status" value="1"/>
</dbReference>
<dbReference type="PANTHER" id="PTHR11995">
    <property type="entry name" value="NADH DEHYDROGENASE"/>
    <property type="match status" value="1"/>
</dbReference>
<dbReference type="PANTHER" id="PTHR11995:SF14">
    <property type="entry name" value="NADH DEHYDROGENASE [UBIQUINONE] IRON-SULFUR PROTEIN 7, MITOCHONDRIAL"/>
    <property type="match status" value="1"/>
</dbReference>
<dbReference type="Pfam" id="PF01058">
    <property type="entry name" value="Oxidored_q6"/>
    <property type="match status" value="1"/>
</dbReference>
<dbReference type="SUPFAM" id="SSF56770">
    <property type="entry name" value="HydA/Nqo6-like"/>
    <property type="match status" value="1"/>
</dbReference>
<keyword id="KW-0004">4Fe-4S</keyword>
<keyword id="KW-0997">Cell inner membrane</keyword>
<keyword id="KW-1003">Cell membrane</keyword>
<keyword id="KW-0408">Iron</keyword>
<keyword id="KW-0411">Iron-sulfur</keyword>
<keyword id="KW-0472">Membrane</keyword>
<keyword id="KW-0479">Metal-binding</keyword>
<keyword id="KW-0520">NAD</keyword>
<keyword id="KW-0874">Quinone</keyword>
<keyword id="KW-1185">Reference proteome</keyword>
<keyword id="KW-1278">Translocase</keyword>
<keyword id="KW-0813">Transport</keyword>
<keyword id="KW-0830">Ubiquinone</keyword>
<protein>
    <recommendedName>
        <fullName evidence="1">NADH-quinone oxidoreductase subunit B 1</fullName>
        <ecNumber evidence="1">7.1.1.-</ecNumber>
    </recommendedName>
    <alternativeName>
        <fullName evidence="1">NADH dehydrogenase I subunit B 1</fullName>
    </alternativeName>
    <alternativeName>
        <fullName evidence="1">NDH-1 subunit B 1</fullName>
    </alternativeName>
</protein>
<evidence type="ECO:0000255" key="1">
    <source>
        <dbReference type="HAMAP-Rule" id="MF_01356"/>
    </source>
</evidence>
<proteinExistence type="inferred from homology"/>
<accession>B5YKI3</accession>
<sequence>MIHVVDTVTEPVEIEQGIKIVPAANTIITTLDKIASWGRCSSLWPLTFGLACCAIEMMATAASHYDLDRFGIIMRATPRQADVMIIAGTVTKKMAPVIVNLYHQMPEPRYVIAMGSCACSGGIFNTYSTVQGVDEILPVDVYIPGCPPRPEALIEGLLKLQEKIKTEPHKKTGCLSGVCLIDKSQRRCSYESCRDNKKD</sequence>